<organism>
    <name type="scientific">Acidithiobacillus ferrooxidans (strain ATCC 53993 / BNL-5-31)</name>
    <name type="common">Leptospirillum ferrooxidans (ATCC 53993)</name>
    <dbReference type="NCBI Taxonomy" id="380394"/>
    <lineage>
        <taxon>Bacteria</taxon>
        <taxon>Pseudomonadati</taxon>
        <taxon>Pseudomonadota</taxon>
        <taxon>Acidithiobacillia</taxon>
        <taxon>Acidithiobacillales</taxon>
        <taxon>Acidithiobacillaceae</taxon>
        <taxon>Acidithiobacillus</taxon>
    </lineage>
</organism>
<protein>
    <recommendedName>
        <fullName evidence="1">Tetraacyldisaccharide 4'-kinase</fullName>
        <ecNumber evidence="1">2.7.1.130</ecNumber>
    </recommendedName>
    <alternativeName>
        <fullName evidence="1">Lipid A 4'-kinase</fullName>
    </alternativeName>
</protein>
<accession>B5EMX2</accession>
<sequence length="332" mass="36036">MTLRQTLEQQWQDGGALATALRPLGALTGKVARWRRRHIQGRAASIPTIVVGNLGVGGSGKTPLVAALARQLTVAGWRVAIVSRGYGARPPHWPYRVQRDDSPQQAGDEPLLLAQEQGQTQAVYLCPDRHRAIAAAAADGYNLALLDDGFQHLALQPSLRLLVLSGPRPLGNGHCLPAGPLRECPDAMLHADALLMDAAAAAAIPERNGPPRFLFRIQPKDLVAVNDPCRSRSLDSLQGQHVTAVTGIARPQRFVASLEGLGAIPDPRFFPDHHSFCASDIAHLPRPLVMTAKDAVKCREFAQADDWTLRIEAELEASSQPWLEQSLLPWRS</sequence>
<feature type="chain" id="PRO_1000205963" description="Tetraacyldisaccharide 4'-kinase">
    <location>
        <begin position="1"/>
        <end position="332"/>
    </location>
</feature>
<feature type="binding site" evidence="1">
    <location>
        <begin position="55"/>
        <end position="62"/>
    </location>
    <ligand>
        <name>ATP</name>
        <dbReference type="ChEBI" id="CHEBI:30616"/>
    </ligand>
</feature>
<reference key="1">
    <citation type="submission" date="2008-08" db="EMBL/GenBank/DDBJ databases">
        <title>Complete sequence of Acidithiobacillus ferrooxidans ATCC 53993.</title>
        <authorList>
            <person name="Lucas S."/>
            <person name="Copeland A."/>
            <person name="Lapidus A."/>
            <person name="Glavina del Rio T."/>
            <person name="Dalin E."/>
            <person name="Tice H."/>
            <person name="Bruce D."/>
            <person name="Goodwin L."/>
            <person name="Pitluck S."/>
            <person name="Sims D."/>
            <person name="Brettin T."/>
            <person name="Detter J.C."/>
            <person name="Han C."/>
            <person name="Kuske C.R."/>
            <person name="Larimer F."/>
            <person name="Land M."/>
            <person name="Hauser L."/>
            <person name="Kyrpides N."/>
            <person name="Lykidis A."/>
            <person name="Borole A.P."/>
        </authorList>
    </citation>
    <scope>NUCLEOTIDE SEQUENCE [LARGE SCALE GENOMIC DNA]</scope>
    <source>
        <strain>ATCC 53993 / BNL-5-31</strain>
    </source>
</reference>
<evidence type="ECO:0000255" key="1">
    <source>
        <dbReference type="HAMAP-Rule" id="MF_00409"/>
    </source>
</evidence>
<keyword id="KW-0067">ATP-binding</keyword>
<keyword id="KW-0418">Kinase</keyword>
<keyword id="KW-0441">Lipid A biosynthesis</keyword>
<keyword id="KW-0444">Lipid biosynthesis</keyword>
<keyword id="KW-0443">Lipid metabolism</keyword>
<keyword id="KW-0547">Nucleotide-binding</keyword>
<keyword id="KW-0808">Transferase</keyword>
<name>LPXK_ACIF5</name>
<proteinExistence type="inferred from homology"/>
<dbReference type="EC" id="2.7.1.130" evidence="1"/>
<dbReference type="EMBL" id="CP001132">
    <property type="protein sequence ID" value="ACH82902.1"/>
    <property type="molecule type" value="Genomic_DNA"/>
</dbReference>
<dbReference type="RefSeq" id="WP_009566882.1">
    <property type="nucleotide sequence ID" value="NC_011206.1"/>
</dbReference>
<dbReference type="SMR" id="B5EMX2"/>
<dbReference type="GeneID" id="65279859"/>
<dbReference type="KEGG" id="afe:Lferr_0649"/>
<dbReference type="eggNOG" id="COG1663">
    <property type="taxonomic scope" value="Bacteria"/>
</dbReference>
<dbReference type="HOGENOM" id="CLU_038816_2_0_6"/>
<dbReference type="UniPathway" id="UPA00359">
    <property type="reaction ID" value="UER00482"/>
</dbReference>
<dbReference type="GO" id="GO:0005886">
    <property type="term" value="C:plasma membrane"/>
    <property type="evidence" value="ECO:0007669"/>
    <property type="project" value="TreeGrafter"/>
</dbReference>
<dbReference type="GO" id="GO:0005524">
    <property type="term" value="F:ATP binding"/>
    <property type="evidence" value="ECO:0007669"/>
    <property type="project" value="UniProtKB-UniRule"/>
</dbReference>
<dbReference type="GO" id="GO:0009029">
    <property type="term" value="F:tetraacyldisaccharide 4'-kinase activity"/>
    <property type="evidence" value="ECO:0007669"/>
    <property type="project" value="UniProtKB-UniRule"/>
</dbReference>
<dbReference type="GO" id="GO:0009245">
    <property type="term" value="P:lipid A biosynthetic process"/>
    <property type="evidence" value="ECO:0007669"/>
    <property type="project" value="UniProtKB-UniRule"/>
</dbReference>
<dbReference type="GO" id="GO:0009244">
    <property type="term" value="P:lipopolysaccharide core region biosynthetic process"/>
    <property type="evidence" value="ECO:0007669"/>
    <property type="project" value="TreeGrafter"/>
</dbReference>
<dbReference type="HAMAP" id="MF_00409">
    <property type="entry name" value="LpxK"/>
    <property type="match status" value="1"/>
</dbReference>
<dbReference type="InterPro" id="IPR003758">
    <property type="entry name" value="LpxK"/>
</dbReference>
<dbReference type="InterPro" id="IPR027417">
    <property type="entry name" value="P-loop_NTPase"/>
</dbReference>
<dbReference type="NCBIfam" id="TIGR00682">
    <property type="entry name" value="lpxK"/>
    <property type="match status" value="1"/>
</dbReference>
<dbReference type="PANTHER" id="PTHR42724">
    <property type="entry name" value="TETRAACYLDISACCHARIDE 4'-KINASE"/>
    <property type="match status" value="1"/>
</dbReference>
<dbReference type="PANTHER" id="PTHR42724:SF1">
    <property type="entry name" value="TETRAACYLDISACCHARIDE 4'-KINASE, MITOCHONDRIAL-RELATED"/>
    <property type="match status" value="1"/>
</dbReference>
<dbReference type="Pfam" id="PF02606">
    <property type="entry name" value="LpxK"/>
    <property type="match status" value="1"/>
</dbReference>
<dbReference type="SUPFAM" id="SSF52540">
    <property type="entry name" value="P-loop containing nucleoside triphosphate hydrolases"/>
    <property type="match status" value="1"/>
</dbReference>
<gene>
    <name evidence="1" type="primary">lpxK</name>
    <name type="ordered locus">Lferr_0649</name>
</gene>
<comment type="function">
    <text evidence="1">Transfers the gamma-phosphate of ATP to the 4'-position of a tetraacyldisaccharide 1-phosphate intermediate (termed DS-1-P) to form tetraacyldisaccharide 1,4'-bis-phosphate (lipid IVA).</text>
</comment>
<comment type="catalytic activity">
    <reaction evidence="1">
        <text>a lipid A disaccharide + ATP = a lipid IVA + ADP + H(+)</text>
        <dbReference type="Rhea" id="RHEA:67840"/>
        <dbReference type="ChEBI" id="CHEBI:15378"/>
        <dbReference type="ChEBI" id="CHEBI:30616"/>
        <dbReference type="ChEBI" id="CHEBI:176343"/>
        <dbReference type="ChEBI" id="CHEBI:176425"/>
        <dbReference type="ChEBI" id="CHEBI:456216"/>
        <dbReference type="EC" id="2.7.1.130"/>
    </reaction>
</comment>
<comment type="pathway">
    <text evidence="1">Glycolipid biosynthesis; lipid IV(A) biosynthesis; lipid IV(A) from (3R)-3-hydroxytetradecanoyl-[acyl-carrier-protein] and UDP-N-acetyl-alpha-D-glucosamine: step 6/6.</text>
</comment>
<comment type="similarity">
    <text evidence="1">Belongs to the LpxK family.</text>
</comment>